<sequence length="801" mass="92427">MFMLKSLGKYIWGNTNSTEIVQIPYGQLYSVHENYRECMFKDASASIRRTTAEFQYQLVIQRAYEEGEEELEDDGDEAEDEQSFLLDEKLHLRFDVNKDSITIMWDNPDFQDGTLYEFTCENCLQEGVAYTFEMVALQCMYERKYRQSHEKATLADLEQFSNPITRPSKEVDSLENIVTKLDLESEDLMRLKKQEQLDDEIAKKYLLGQQEAEEPLVQQQTSIVNPEKEEVTKTENIKSLEGELMGTISAELHLFDAVEEVFILQDPNVEASVFDLGDWNYWFTISTEEKTWLSQSVDADMNPVFSFEHLSFIWNYFDANSNAFSWLLRFDSQVRMEQFQELLMRALWESLNQQRWLKIDDEQRDYVMETFHEDEELEDSEDEEFARQQLLSRKEEEEEEDEEASDFEDSFADFSDGEADDLDESRWRKEAAKEHNSLLAVGYKNDRSYVVRNNKIGVFKHVDEKGLKFQTALNNLSTPKGKSLRPSKLMLHNQDSSILFQTENAPHSLYHMDIEYGKIVDEWKVHDDVPLVTFTPDNKFAQMTAEQTLIGLSNNSIFRIDPRVEGNKLVAEQFKQYATKNDFSSAATTENGYIAVASNKGDIRLFDRIGVNAKTALPALGEAIIGVDVTASGDFVLATCKTYILLIDTRIKEGRYAGRLGFERNFAKDKKPKPKRLQLSPQHIAMMQRELKGGASFTPAKFNTGIDAKETTIVSSIGPFLISWNLDRVKRGFTDSYKIRRYDANVQAEDFRFGTDRSLIVALPDDVAMVDKSSLRRPTRESICTPVKKLRSKHDIVNAPY</sequence>
<protein>
    <recommendedName>
        <fullName>Vacuolar import and degradation protein 27</fullName>
    </recommendedName>
</protein>
<organism>
    <name type="scientific">Schizosaccharomyces pombe (strain 972 / ATCC 24843)</name>
    <name type="common">Fission yeast</name>
    <dbReference type="NCBI Taxonomy" id="284812"/>
    <lineage>
        <taxon>Eukaryota</taxon>
        <taxon>Fungi</taxon>
        <taxon>Dikarya</taxon>
        <taxon>Ascomycota</taxon>
        <taxon>Taphrinomycotina</taxon>
        <taxon>Schizosaccharomycetes</taxon>
        <taxon>Schizosaccharomycetales</taxon>
        <taxon>Schizosaccharomycetaceae</taxon>
        <taxon>Schizosaccharomyces</taxon>
    </lineage>
</organism>
<reference key="1">
    <citation type="journal article" date="2002" name="Nature">
        <title>The genome sequence of Schizosaccharomyces pombe.</title>
        <authorList>
            <person name="Wood V."/>
            <person name="Gwilliam R."/>
            <person name="Rajandream M.A."/>
            <person name="Lyne M.H."/>
            <person name="Lyne R."/>
            <person name="Stewart A."/>
            <person name="Sgouros J.G."/>
            <person name="Peat N."/>
            <person name="Hayles J."/>
            <person name="Baker S.G."/>
            <person name="Basham D."/>
            <person name="Bowman S."/>
            <person name="Brooks K."/>
            <person name="Brown D."/>
            <person name="Brown S."/>
            <person name="Chillingworth T."/>
            <person name="Churcher C.M."/>
            <person name="Collins M."/>
            <person name="Connor R."/>
            <person name="Cronin A."/>
            <person name="Davis P."/>
            <person name="Feltwell T."/>
            <person name="Fraser A."/>
            <person name="Gentles S."/>
            <person name="Goble A."/>
            <person name="Hamlin N."/>
            <person name="Harris D.E."/>
            <person name="Hidalgo J."/>
            <person name="Hodgson G."/>
            <person name="Holroyd S."/>
            <person name="Hornsby T."/>
            <person name="Howarth S."/>
            <person name="Huckle E.J."/>
            <person name="Hunt S."/>
            <person name="Jagels K."/>
            <person name="James K.D."/>
            <person name="Jones L."/>
            <person name="Jones M."/>
            <person name="Leather S."/>
            <person name="McDonald S."/>
            <person name="McLean J."/>
            <person name="Mooney P."/>
            <person name="Moule S."/>
            <person name="Mungall K.L."/>
            <person name="Murphy L.D."/>
            <person name="Niblett D."/>
            <person name="Odell C."/>
            <person name="Oliver K."/>
            <person name="O'Neil S."/>
            <person name="Pearson D."/>
            <person name="Quail M.A."/>
            <person name="Rabbinowitsch E."/>
            <person name="Rutherford K.M."/>
            <person name="Rutter S."/>
            <person name="Saunders D."/>
            <person name="Seeger K."/>
            <person name="Sharp S."/>
            <person name="Skelton J."/>
            <person name="Simmonds M.N."/>
            <person name="Squares R."/>
            <person name="Squares S."/>
            <person name="Stevens K."/>
            <person name="Taylor K."/>
            <person name="Taylor R.G."/>
            <person name="Tivey A."/>
            <person name="Walsh S.V."/>
            <person name="Warren T."/>
            <person name="Whitehead S."/>
            <person name="Woodward J.R."/>
            <person name="Volckaert G."/>
            <person name="Aert R."/>
            <person name="Robben J."/>
            <person name="Grymonprez B."/>
            <person name="Weltjens I."/>
            <person name="Vanstreels E."/>
            <person name="Rieger M."/>
            <person name="Schaefer M."/>
            <person name="Mueller-Auer S."/>
            <person name="Gabel C."/>
            <person name="Fuchs M."/>
            <person name="Duesterhoeft A."/>
            <person name="Fritzc C."/>
            <person name="Holzer E."/>
            <person name="Moestl D."/>
            <person name="Hilbert H."/>
            <person name="Borzym K."/>
            <person name="Langer I."/>
            <person name="Beck A."/>
            <person name="Lehrach H."/>
            <person name="Reinhardt R."/>
            <person name="Pohl T.M."/>
            <person name="Eger P."/>
            <person name="Zimmermann W."/>
            <person name="Wedler H."/>
            <person name="Wambutt R."/>
            <person name="Purnelle B."/>
            <person name="Goffeau A."/>
            <person name="Cadieu E."/>
            <person name="Dreano S."/>
            <person name="Gloux S."/>
            <person name="Lelaure V."/>
            <person name="Mottier S."/>
            <person name="Galibert F."/>
            <person name="Aves S.J."/>
            <person name="Xiang Z."/>
            <person name="Hunt C."/>
            <person name="Moore K."/>
            <person name="Hurst S.M."/>
            <person name="Lucas M."/>
            <person name="Rochet M."/>
            <person name="Gaillardin C."/>
            <person name="Tallada V.A."/>
            <person name="Garzon A."/>
            <person name="Thode G."/>
            <person name="Daga R.R."/>
            <person name="Cruzado L."/>
            <person name="Jimenez J."/>
            <person name="Sanchez M."/>
            <person name="del Rey F."/>
            <person name="Benito J."/>
            <person name="Dominguez A."/>
            <person name="Revuelta J.L."/>
            <person name="Moreno S."/>
            <person name="Armstrong J."/>
            <person name="Forsburg S.L."/>
            <person name="Cerutti L."/>
            <person name="Lowe T."/>
            <person name="McCombie W.R."/>
            <person name="Paulsen I."/>
            <person name="Potashkin J."/>
            <person name="Shpakovski G.V."/>
            <person name="Ussery D."/>
            <person name="Barrell B.G."/>
            <person name="Nurse P."/>
        </authorList>
    </citation>
    <scope>NUCLEOTIDE SEQUENCE [LARGE SCALE GENOMIC DNA]</scope>
    <source>
        <strain>972 / ATCC 24843</strain>
    </source>
</reference>
<reference key="2">
    <citation type="journal article" date="2000" name="Genes Cells">
        <title>Large-scale screening of intracellular protein localization in living fission yeast cells by the use of a GFP-fusion genomic DNA library.</title>
        <authorList>
            <person name="Ding D.-Q."/>
            <person name="Tomita Y."/>
            <person name="Yamamoto A."/>
            <person name="Chikashige Y."/>
            <person name="Haraguchi T."/>
            <person name="Hiraoka Y."/>
        </authorList>
    </citation>
    <scope>NUCLEOTIDE SEQUENCE [LARGE SCALE GENOMIC DNA] OF 159-339</scope>
    <source>
        <strain>ATCC 38364 / 968</strain>
    </source>
</reference>
<reference key="3">
    <citation type="journal article" date="2006" name="Nat. Biotechnol.">
        <title>ORFeome cloning and global analysis of protein localization in the fission yeast Schizosaccharomyces pombe.</title>
        <authorList>
            <person name="Matsuyama A."/>
            <person name="Arai R."/>
            <person name="Yashiroda Y."/>
            <person name="Shirai A."/>
            <person name="Kamata A."/>
            <person name="Sekido S."/>
            <person name="Kobayashi Y."/>
            <person name="Hashimoto A."/>
            <person name="Hamamoto M."/>
            <person name="Hiraoka Y."/>
            <person name="Horinouchi S."/>
            <person name="Yoshida M."/>
        </authorList>
    </citation>
    <scope>SUBCELLULAR LOCATION [LARGE SCALE ANALYSIS]</scope>
</reference>
<reference key="4">
    <citation type="journal article" date="2008" name="J. Proteome Res.">
        <title>Phosphoproteome analysis of fission yeast.</title>
        <authorList>
            <person name="Wilson-Grady J.T."/>
            <person name="Villen J."/>
            <person name="Gygi S.P."/>
        </authorList>
    </citation>
    <scope>PHOSPHORYLATION [LARGE SCALE ANALYSIS] AT SER-405; SER-415 AND THR-478</scope>
    <scope>IDENTIFICATION BY MASS SPECTROMETRY</scope>
</reference>
<name>VID27_SCHPO</name>
<feature type="chain" id="PRO_0000339146" description="Vacuolar import and degradation protein 27">
    <location>
        <begin position="1"/>
        <end position="801"/>
    </location>
</feature>
<feature type="region of interest" description="Disordered" evidence="2">
    <location>
        <begin position="372"/>
        <end position="427"/>
    </location>
</feature>
<feature type="compositionally biased region" description="Acidic residues" evidence="2">
    <location>
        <begin position="372"/>
        <end position="384"/>
    </location>
</feature>
<feature type="compositionally biased region" description="Acidic residues" evidence="2">
    <location>
        <begin position="396"/>
        <end position="423"/>
    </location>
</feature>
<feature type="modified residue" description="Phosphoserine" evidence="4">
    <location>
        <position position="405"/>
    </location>
</feature>
<feature type="modified residue" description="Phosphoserine" evidence="4">
    <location>
        <position position="415"/>
    </location>
</feature>
<feature type="modified residue" description="Phosphothreonine" evidence="4">
    <location>
        <position position="478"/>
    </location>
</feature>
<evidence type="ECO:0000250" key="1"/>
<evidence type="ECO:0000256" key="2">
    <source>
        <dbReference type="SAM" id="MobiDB-lite"/>
    </source>
</evidence>
<evidence type="ECO:0000269" key="3">
    <source>
    </source>
</evidence>
<evidence type="ECO:0000269" key="4">
    <source>
    </source>
</evidence>
<evidence type="ECO:0000305" key="5"/>
<dbReference type="EMBL" id="CU329671">
    <property type="protein sequence ID" value="CAA20062.2"/>
    <property type="molecule type" value="Genomic_DNA"/>
</dbReference>
<dbReference type="EMBL" id="AB027933">
    <property type="protein sequence ID" value="BAA87237.1"/>
    <property type="molecule type" value="Genomic_DNA"/>
</dbReference>
<dbReference type="PIR" id="T39530">
    <property type="entry name" value="T39530"/>
</dbReference>
<dbReference type="RefSeq" id="NP_595218.1">
    <property type="nucleotide sequence ID" value="NM_001021125.2"/>
</dbReference>
<dbReference type="SMR" id="Q1MTR3"/>
<dbReference type="BioGRID" id="276509">
    <property type="interactions" value="7"/>
</dbReference>
<dbReference type="FunCoup" id="Q1MTR3">
    <property type="interactions" value="248"/>
</dbReference>
<dbReference type="STRING" id="284812.Q1MTR3"/>
<dbReference type="iPTMnet" id="Q1MTR3"/>
<dbReference type="PaxDb" id="4896-SPBC1685.14c.1"/>
<dbReference type="EnsemblFungi" id="SPBC1685.14c.1">
    <property type="protein sequence ID" value="SPBC1685.14c.1:pep"/>
    <property type="gene ID" value="SPBC1685.14c"/>
</dbReference>
<dbReference type="GeneID" id="2539965"/>
<dbReference type="KEGG" id="spo:2539965"/>
<dbReference type="PomBase" id="SPBC1685.14c">
    <property type="gene designation" value="vid27"/>
</dbReference>
<dbReference type="VEuPathDB" id="FungiDB:SPBC1685.14c"/>
<dbReference type="eggNOG" id="KOG2395">
    <property type="taxonomic scope" value="Eukaryota"/>
</dbReference>
<dbReference type="HOGENOM" id="CLU_007002_0_0_1"/>
<dbReference type="InParanoid" id="Q1MTR3"/>
<dbReference type="OMA" id="RLNETKW"/>
<dbReference type="PRO" id="PR:Q1MTR3"/>
<dbReference type="Proteomes" id="UP000002485">
    <property type="component" value="Chromosome II"/>
</dbReference>
<dbReference type="GO" id="GO:0005737">
    <property type="term" value="C:cytoplasm"/>
    <property type="evidence" value="ECO:0007005"/>
    <property type="project" value="PomBase"/>
</dbReference>
<dbReference type="GO" id="GO:0005829">
    <property type="term" value="C:cytosol"/>
    <property type="evidence" value="ECO:0007005"/>
    <property type="project" value="PomBase"/>
</dbReference>
<dbReference type="GO" id="GO:0005635">
    <property type="term" value="C:nuclear envelope"/>
    <property type="evidence" value="ECO:0007005"/>
    <property type="project" value="PomBase"/>
</dbReference>
<dbReference type="GO" id="GO:0005634">
    <property type="term" value="C:nucleus"/>
    <property type="evidence" value="ECO:0000318"/>
    <property type="project" value="GO_Central"/>
</dbReference>
<dbReference type="Gene3D" id="2.130.10.10">
    <property type="entry name" value="YVTN repeat-like/Quinoprotein amine dehydrogenase"/>
    <property type="match status" value="1"/>
</dbReference>
<dbReference type="InterPro" id="IPR011044">
    <property type="entry name" value="Quino_amine_DH_bsu"/>
</dbReference>
<dbReference type="InterPro" id="IPR040458">
    <property type="entry name" value="Vid27"/>
</dbReference>
<dbReference type="InterPro" id="IPR013863">
    <property type="entry name" value="VID27_C"/>
</dbReference>
<dbReference type="InterPro" id="IPR040979">
    <property type="entry name" value="Vid27_N"/>
</dbReference>
<dbReference type="InterPro" id="IPR040768">
    <property type="entry name" value="Vid27_PH"/>
</dbReference>
<dbReference type="InterPro" id="IPR015943">
    <property type="entry name" value="WD40/YVTN_repeat-like_dom_sf"/>
</dbReference>
<dbReference type="PANTHER" id="PTHR31913">
    <property type="entry name" value="VACUOLAR IMPORT AND DEGRADATION PROTEIN 27"/>
    <property type="match status" value="1"/>
</dbReference>
<dbReference type="PANTHER" id="PTHR31913:SF0">
    <property type="entry name" value="VACUOLAR IMPORT AND DEGRADATION PROTEIN 27"/>
    <property type="match status" value="1"/>
</dbReference>
<dbReference type="Pfam" id="PF08553">
    <property type="entry name" value="VID27"/>
    <property type="match status" value="1"/>
</dbReference>
<dbReference type="Pfam" id="PF17748">
    <property type="entry name" value="VID27_N"/>
    <property type="match status" value="1"/>
</dbReference>
<dbReference type="Pfam" id="PF17747">
    <property type="entry name" value="VID27_PH"/>
    <property type="match status" value="1"/>
</dbReference>
<dbReference type="SUPFAM" id="SSF50969">
    <property type="entry name" value="YVTN repeat-like/Quinoprotein amine dehydrogenase"/>
    <property type="match status" value="1"/>
</dbReference>
<gene>
    <name type="primary">vid27</name>
    <name type="ORF">SPBC1685.14c</name>
</gene>
<accession>Q1MTR3</accession>
<accession>O74334</accession>
<accession>Q9US95</accession>
<comment type="function">
    <text evidence="1">Has a role in the negative regulation of gluconeogenesis. Required for vacuolar catabolite degradation of fructose-1,6-bisphosphatase (FBPase) (By similarity).</text>
</comment>
<comment type="subcellular location">
    <subcellularLocation>
        <location evidence="3">Cytoplasm</location>
    </subcellularLocation>
</comment>
<comment type="similarity">
    <text evidence="5">Belongs to the VID27 family.</text>
</comment>
<proteinExistence type="evidence at protein level"/>
<keyword id="KW-0963">Cytoplasm</keyword>
<keyword id="KW-0597">Phosphoprotein</keyword>
<keyword id="KW-1185">Reference proteome</keyword>